<accession>A8YUF8</accession>
<comment type="function">
    <text evidence="1">Catalyzes the conversion of glucosamine-6-phosphate to glucosamine-1-phosphate.</text>
</comment>
<comment type="catalytic activity">
    <reaction evidence="1">
        <text>alpha-D-glucosamine 1-phosphate = D-glucosamine 6-phosphate</text>
        <dbReference type="Rhea" id="RHEA:23424"/>
        <dbReference type="ChEBI" id="CHEBI:58516"/>
        <dbReference type="ChEBI" id="CHEBI:58725"/>
        <dbReference type="EC" id="5.4.2.10"/>
    </reaction>
</comment>
<comment type="cofactor">
    <cofactor evidence="1">
        <name>Mg(2+)</name>
        <dbReference type="ChEBI" id="CHEBI:18420"/>
    </cofactor>
    <text evidence="1">Binds 1 Mg(2+) ion per subunit.</text>
</comment>
<comment type="PTM">
    <text evidence="1">Activated by phosphorylation.</text>
</comment>
<comment type="similarity">
    <text evidence="1">Belongs to the phosphohexose mutase family.</text>
</comment>
<proteinExistence type="inferred from homology"/>
<reference key="1">
    <citation type="journal article" date="2008" name="J. Bacteriol.">
        <title>Genome sequence of Lactobacillus helveticus: an organism distinguished by selective gene loss and IS element expansion.</title>
        <authorList>
            <person name="Callanan M."/>
            <person name="Kaleta P."/>
            <person name="O'Callaghan J."/>
            <person name="O'Sullivan O."/>
            <person name="Jordan K."/>
            <person name="McAuliffe O."/>
            <person name="Sangrador-Vegas A."/>
            <person name="Slattery L."/>
            <person name="Fitzgerald G.F."/>
            <person name="Beresford T."/>
            <person name="Ross R.P."/>
        </authorList>
    </citation>
    <scope>NUCLEOTIDE SEQUENCE [LARGE SCALE GENOMIC DNA]</scope>
    <source>
        <strain>DPC 4571</strain>
    </source>
</reference>
<protein>
    <recommendedName>
        <fullName evidence="1">Phosphoglucosamine mutase</fullName>
        <ecNumber evidence="1">5.4.2.10</ecNumber>
    </recommendedName>
</protein>
<sequence>MLKYFGTDGVRGVANQGLTPEMAFKLGRDGGYVLTKNKKDGEQAKVLVSRDTRISGQMLEYALISGLLSVGIEVLEVGVITTPGLSYLVRAQGADAGVQISASHNPVEDNGIKFFGSDGLKLSDEMEEEIEKLIDAKGDNLPRPSAEGLGTVTDFHEGSAKYLQFIENTIPEDLDGIKVVIDGANGASSALISRLFADCGVDFTTIYTHPNGLNINDHCGATHTENLQKEVVKQGAQLGLAFDGDADRCIAVDENGNEVDGDHIMYVIGSYLAEHGRLKKDTIVTTVMSNLGFTKALEKEGLKNVRTQVGDRYVSEEMRAHGYNLGGEQSGHVIMSDYHNTGDGMLTGLHLMLVMKKTGKSLSELLKDFKDYPQGLVNVPVKDKKSWKEHQPILDVIAEVEKDMNGNGRVLVRPSGTQDLLRVMAEGPTQEETDAYVDRIVKVVEKEMGK</sequence>
<dbReference type="EC" id="5.4.2.10" evidence="1"/>
<dbReference type="EMBL" id="CP000517">
    <property type="protein sequence ID" value="ABX26896.1"/>
    <property type="molecule type" value="Genomic_DNA"/>
</dbReference>
<dbReference type="RefSeq" id="WP_012211642.1">
    <property type="nucleotide sequence ID" value="NC_010080.1"/>
</dbReference>
<dbReference type="SMR" id="A8YUF8"/>
<dbReference type="KEGG" id="lhe:lhv_0759"/>
<dbReference type="eggNOG" id="COG1109">
    <property type="taxonomic scope" value="Bacteria"/>
</dbReference>
<dbReference type="HOGENOM" id="CLU_016950_7_0_9"/>
<dbReference type="Proteomes" id="UP000000790">
    <property type="component" value="Chromosome"/>
</dbReference>
<dbReference type="GO" id="GO:0005829">
    <property type="term" value="C:cytosol"/>
    <property type="evidence" value="ECO:0007669"/>
    <property type="project" value="TreeGrafter"/>
</dbReference>
<dbReference type="GO" id="GO:0000287">
    <property type="term" value="F:magnesium ion binding"/>
    <property type="evidence" value="ECO:0007669"/>
    <property type="project" value="UniProtKB-UniRule"/>
</dbReference>
<dbReference type="GO" id="GO:0008966">
    <property type="term" value="F:phosphoglucosamine mutase activity"/>
    <property type="evidence" value="ECO:0007669"/>
    <property type="project" value="UniProtKB-UniRule"/>
</dbReference>
<dbReference type="GO" id="GO:0004615">
    <property type="term" value="F:phosphomannomutase activity"/>
    <property type="evidence" value="ECO:0007669"/>
    <property type="project" value="TreeGrafter"/>
</dbReference>
<dbReference type="GO" id="GO:0005975">
    <property type="term" value="P:carbohydrate metabolic process"/>
    <property type="evidence" value="ECO:0007669"/>
    <property type="project" value="InterPro"/>
</dbReference>
<dbReference type="GO" id="GO:0009252">
    <property type="term" value="P:peptidoglycan biosynthetic process"/>
    <property type="evidence" value="ECO:0007669"/>
    <property type="project" value="TreeGrafter"/>
</dbReference>
<dbReference type="GO" id="GO:0006048">
    <property type="term" value="P:UDP-N-acetylglucosamine biosynthetic process"/>
    <property type="evidence" value="ECO:0007669"/>
    <property type="project" value="TreeGrafter"/>
</dbReference>
<dbReference type="CDD" id="cd05802">
    <property type="entry name" value="GlmM"/>
    <property type="match status" value="1"/>
</dbReference>
<dbReference type="FunFam" id="3.30.310.50:FF:000001">
    <property type="entry name" value="Phosphoglucosamine mutase"/>
    <property type="match status" value="1"/>
</dbReference>
<dbReference type="FunFam" id="3.40.120.10:FF:000001">
    <property type="entry name" value="Phosphoglucosamine mutase"/>
    <property type="match status" value="1"/>
</dbReference>
<dbReference type="FunFam" id="3.40.120.10:FF:000002">
    <property type="entry name" value="Phosphoglucosamine mutase"/>
    <property type="match status" value="1"/>
</dbReference>
<dbReference type="Gene3D" id="3.40.120.10">
    <property type="entry name" value="Alpha-D-Glucose-1,6-Bisphosphate, subunit A, domain 3"/>
    <property type="match status" value="3"/>
</dbReference>
<dbReference type="Gene3D" id="3.30.310.50">
    <property type="entry name" value="Alpha-D-phosphohexomutase, C-terminal domain"/>
    <property type="match status" value="1"/>
</dbReference>
<dbReference type="HAMAP" id="MF_01554_B">
    <property type="entry name" value="GlmM_B"/>
    <property type="match status" value="1"/>
</dbReference>
<dbReference type="InterPro" id="IPR005844">
    <property type="entry name" value="A-D-PHexomutase_a/b/a-I"/>
</dbReference>
<dbReference type="InterPro" id="IPR016055">
    <property type="entry name" value="A-D-PHexomutase_a/b/a-I/II/III"/>
</dbReference>
<dbReference type="InterPro" id="IPR005845">
    <property type="entry name" value="A-D-PHexomutase_a/b/a-II"/>
</dbReference>
<dbReference type="InterPro" id="IPR005846">
    <property type="entry name" value="A-D-PHexomutase_a/b/a-III"/>
</dbReference>
<dbReference type="InterPro" id="IPR005843">
    <property type="entry name" value="A-D-PHexomutase_C"/>
</dbReference>
<dbReference type="InterPro" id="IPR036900">
    <property type="entry name" value="A-D-PHexomutase_C_sf"/>
</dbReference>
<dbReference type="InterPro" id="IPR016066">
    <property type="entry name" value="A-D-PHexomutase_CS"/>
</dbReference>
<dbReference type="InterPro" id="IPR005841">
    <property type="entry name" value="Alpha-D-phosphohexomutase_SF"/>
</dbReference>
<dbReference type="InterPro" id="IPR006352">
    <property type="entry name" value="GlmM_bact"/>
</dbReference>
<dbReference type="InterPro" id="IPR050060">
    <property type="entry name" value="Phosphoglucosamine_mutase"/>
</dbReference>
<dbReference type="NCBIfam" id="TIGR01455">
    <property type="entry name" value="glmM"/>
    <property type="match status" value="1"/>
</dbReference>
<dbReference type="PANTHER" id="PTHR42946:SF1">
    <property type="entry name" value="PHOSPHOGLUCOMUTASE (ALPHA-D-GLUCOSE-1,6-BISPHOSPHATE-DEPENDENT)"/>
    <property type="match status" value="1"/>
</dbReference>
<dbReference type="PANTHER" id="PTHR42946">
    <property type="entry name" value="PHOSPHOHEXOSE MUTASE"/>
    <property type="match status" value="1"/>
</dbReference>
<dbReference type="Pfam" id="PF02878">
    <property type="entry name" value="PGM_PMM_I"/>
    <property type="match status" value="1"/>
</dbReference>
<dbReference type="Pfam" id="PF02879">
    <property type="entry name" value="PGM_PMM_II"/>
    <property type="match status" value="1"/>
</dbReference>
<dbReference type="Pfam" id="PF02880">
    <property type="entry name" value="PGM_PMM_III"/>
    <property type="match status" value="1"/>
</dbReference>
<dbReference type="Pfam" id="PF00408">
    <property type="entry name" value="PGM_PMM_IV"/>
    <property type="match status" value="1"/>
</dbReference>
<dbReference type="PRINTS" id="PR00509">
    <property type="entry name" value="PGMPMM"/>
</dbReference>
<dbReference type="SUPFAM" id="SSF55957">
    <property type="entry name" value="Phosphoglucomutase, C-terminal domain"/>
    <property type="match status" value="1"/>
</dbReference>
<dbReference type="SUPFAM" id="SSF53738">
    <property type="entry name" value="Phosphoglucomutase, first 3 domains"/>
    <property type="match status" value="3"/>
</dbReference>
<dbReference type="PROSITE" id="PS00710">
    <property type="entry name" value="PGM_PMM"/>
    <property type="match status" value="1"/>
</dbReference>
<evidence type="ECO:0000255" key="1">
    <source>
        <dbReference type="HAMAP-Rule" id="MF_01554"/>
    </source>
</evidence>
<feature type="chain" id="PRO_1000073573" description="Phosphoglucosamine mutase">
    <location>
        <begin position="1"/>
        <end position="450"/>
    </location>
</feature>
<feature type="active site" description="Phosphoserine intermediate" evidence="1">
    <location>
        <position position="103"/>
    </location>
</feature>
<feature type="binding site" description="via phosphate group" evidence="1">
    <location>
        <position position="103"/>
    </location>
    <ligand>
        <name>Mg(2+)</name>
        <dbReference type="ChEBI" id="CHEBI:18420"/>
    </ligand>
</feature>
<feature type="binding site" evidence="1">
    <location>
        <position position="243"/>
    </location>
    <ligand>
        <name>Mg(2+)</name>
        <dbReference type="ChEBI" id="CHEBI:18420"/>
    </ligand>
</feature>
<feature type="binding site" evidence="1">
    <location>
        <position position="245"/>
    </location>
    <ligand>
        <name>Mg(2+)</name>
        <dbReference type="ChEBI" id="CHEBI:18420"/>
    </ligand>
</feature>
<feature type="binding site" evidence="1">
    <location>
        <position position="247"/>
    </location>
    <ligand>
        <name>Mg(2+)</name>
        <dbReference type="ChEBI" id="CHEBI:18420"/>
    </ligand>
</feature>
<feature type="modified residue" description="Phosphoserine" evidence="1">
    <location>
        <position position="103"/>
    </location>
</feature>
<name>GLMM_LACH4</name>
<organism>
    <name type="scientific">Lactobacillus helveticus (strain DPC 4571)</name>
    <dbReference type="NCBI Taxonomy" id="405566"/>
    <lineage>
        <taxon>Bacteria</taxon>
        <taxon>Bacillati</taxon>
        <taxon>Bacillota</taxon>
        <taxon>Bacilli</taxon>
        <taxon>Lactobacillales</taxon>
        <taxon>Lactobacillaceae</taxon>
        <taxon>Lactobacillus</taxon>
    </lineage>
</organism>
<gene>
    <name evidence="1" type="primary">glmM</name>
    <name type="ordered locus">lhv_0759</name>
</gene>
<keyword id="KW-0413">Isomerase</keyword>
<keyword id="KW-0460">Magnesium</keyword>
<keyword id="KW-0479">Metal-binding</keyword>
<keyword id="KW-0597">Phosphoprotein</keyword>